<organism>
    <name type="scientific">Saccharomyces cerevisiae (strain ATCC 204508 / S288c)</name>
    <name type="common">Baker's yeast</name>
    <dbReference type="NCBI Taxonomy" id="559292"/>
    <lineage>
        <taxon>Eukaryota</taxon>
        <taxon>Fungi</taxon>
        <taxon>Dikarya</taxon>
        <taxon>Ascomycota</taxon>
        <taxon>Saccharomycotina</taxon>
        <taxon>Saccharomycetes</taxon>
        <taxon>Saccharomycetales</taxon>
        <taxon>Saccharomycetaceae</taxon>
        <taxon>Saccharomyces</taxon>
    </lineage>
</organism>
<accession>P32331</accession>
<accession>D6W464</accession>
<accession>Q12002</accession>
<sequence>MSEEFPSPQLIDDLEEHPQHDNARVVKDLLAGTAGGIAQVLVGQPFDTTKVRLQTSSTPTTAMEVVRKLLANEGPRGFYKGTLTPLIGVGACVSLQFGVNEAMKRFFHHRNADMSSTLSLPQYYACGVTGGIVNSFLASPIEHVRIRLQTQTGSGTNAEFKGPLECIKKLRHNKALLRGLTPTILREGHGCGTYFLVYEALIANQMNKRRGLERKDIPAWKLCIFGALSGTALWLMVYPLDVIKSVMQTDNLQKPKFGNSISSVAKTLYANGGIGAFFKGFGPTMLRAAPANGATFATFELAMRLLG</sequence>
<protein>
    <recommendedName>
        <fullName evidence="6">Mitochondrial glycine transporter YMC1</fullName>
    </recommendedName>
    <alternativeName>
        <fullName evidence="5">Yeast mitochondrial carrier protein 1</fullName>
    </alternativeName>
</protein>
<feature type="chain" id="PRO_0000019265" description="Mitochondrial glycine transporter YMC1">
    <location>
        <begin position="1"/>
        <end position="307"/>
    </location>
</feature>
<feature type="transmembrane region" description="Helical; Name=1" evidence="1">
    <location>
        <begin position="29"/>
        <end position="49"/>
    </location>
</feature>
<feature type="transmembrane region" description="Helical; Name=2" evidence="1">
    <location>
        <begin position="83"/>
        <end position="103"/>
    </location>
</feature>
<feature type="transmembrane region" description="Helical; Name=3" evidence="1">
    <location>
        <begin position="118"/>
        <end position="138"/>
    </location>
</feature>
<feature type="transmembrane region" description="Helical; Name=4" evidence="1">
    <location>
        <begin position="183"/>
        <end position="203"/>
    </location>
</feature>
<feature type="transmembrane region" description="Helical; Name=5" evidence="1">
    <location>
        <begin position="223"/>
        <end position="243"/>
    </location>
</feature>
<feature type="transmembrane region" description="Helical; Name=6" evidence="1">
    <location>
        <begin position="277"/>
        <end position="298"/>
    </location>
</feature>
<feature type="repeat" description="Solcar 1" evidence="2">
    <location>
        <begin position="26"/>
        <end position="106"/>
    </location>
</feature>
<feature type="repeat" description="Solcar 2" evidence="2">
    <location>
        <begin position="121"/>
        <end position="204"/>
    </location>
</feature>
<feature type="repeat" description="Solcar 3" evidence="2">
    <location>
        <begin position="218"/>
        <end position="305"/>
    </location>
</feature>
<feature type="sequence conflict" description="In Ref. 1; CAA47602." evidence="6" ref="1">
    <original>E</original>
    <variation>Q</variation>
    <location>
        <position position="101"/>
    </location>
</feature>
<comment type="function">
    <text evidence="4">Secondary mitochondrial glycine transporter required for the biosynthesis of heme at high glycine concentrations. Imports the precursor glycine into the mitochondrial matrix, where it is condensed with succinyl-CoA to produce 5-aminolevulinate (ALA), the first step of heme biosynthesis.</text>
</comment>
<comment type="subcellular location">
    <subcellularLocation>
        <location evidence="3 7">Mitochondrion inner membrane</location>
        <topology evidence="3 7">Multi-pass membrane protein</topology>
    </subcellularLocation>
</comment>
<comment type="similarity">
    <text evidence="6">Belongs to the mitochondrial carrier (TC 2.A.29) family.</text>
</comment>
<gene>
    <name evidence="5" type="primary">YMC1</name>
    <name evidence="8" type="ordered locus">YPR058W</name>
    <name type="ORF">YP9499.14</name>
</gene>
<name>YMC1_YEAST</name>
<keyword id="KW-0472">Membrane</keyword>
<keyword id="KW-0496">Mitochondrion</keyword>
<keyword id="KW-0999">Mitochondrion inner membrane</keyword>
<keyword id="KW-1185">Reference proteome</keyword>
<keyword id="KW-0677">Repeat</keyword>
<keyword id="KW-0812">Transmembrane</keyword>
<keyword id="KW-1133">Transmembrane helix</keyword>
<keyword id="KW-0813">Transport</keyword>
<evidence type="ECO:0000255" key="1"/>
<evidence type="ECO:0000255" key="2">
    <source>
        <dbReference type="PROSITE-ProRule" id="PRU00282"/>
    </source>
</evidence>
<evidence type="ECO:0000269" key="3">
    <source>
    </source>
</evidence>
<evidence type="ECO:0000269" key="4">
    <source>
    </source>
</evidence>
<evidence type="ECO:0000303" key="5">
    <source>
    </source>
</evidence>
<evidence type="ECO:0000305" key="6"/>
<evidence type="ECO:0000305" key="7">
    <source>
    </source>
</evidence>
<evidence type="ECO:0000312" key="8">
    <source>
        <dbReference type="SGD" id="S000006262"/>
    </source>
</evidence>
<dbReference type="EMBL" id="X67122">
    <property type="protein sequence ID" value="CAA47602.1"/>
    <property type="molecule type" value="Genomic_DNA"/>
</dbReference>
<dbReference type="EMBL" id="Z71255">
    <property type="protein sequence ID" value="CAA95003.1"/>
    <property type="molecule type" value="Genomic_DNA"/>
</dbReference>
<dbReference type="EMBL" id="Z49219">
    <property type="protein sequence ID" value="CAA89176.1"/>
    <property type="molecule type" value="Genomic_DNA"/>
</dbReference>
<dbReference type="EMBL" id="BK006949">
    <property type="protein sequence ID" value="DAA11480.1"/>
    <property type="molecule type" value="Genomic_DNA"/>
</dbReference>
<dbReference type="PIR" id="S54080">
    <property type="entry name" value="S54080"/>
</dbReference>
<dbReference type="RefSeq" id="NP_015383.1">
    <property type="nucleotide sequence ID" value="NM_001184155.1"/>
</dbReference>
<dbReference type="SMR" id="P32331"/>
<dbReference type="BioGRID" id="36232">
    <property type="interactions" value="60"/>
</dbReference>
<dbReference type="DIP" id="DIP-3895N"/>
<dbReference type="FunCoup" id="P32331">
    <property type="interactions" value="254"/>
</dbReference>
<dbReference type="IntAct" id="P32331">
    <property type="interactions" value="1"/>
</dbReference>
<dbReference type="MINT" id="P32331"/>
<dbReference type="STRING" id="4932.YPR058W"/>
<dbReference type="TCDB" id="2.A.29.8.12">
    <property type="family name" value="the mitochondrial carrier (mc) family"/>
</dbReference>
<dbReference type="PaxDb" id="4932-YPR058W"/>
<dbReference type="PeptideAtlas" id="P32331"/>
<dbReference type="EnsemblFungi" id="YPR058W_mRNA">
    <property type="protein sequence ID" value="YPR058W"/>
    <property type="gene ID" value="YPR058W"/>
</dbReference>
<dbReference type="GeneID" id="856171"/>
<dbReference type="KEGG" id="sce:YPR058W"/>
<dbReference type="AGR" id="SGD:S000006262"/>
<dbReference type="SGD" id="S000006262">
    <property type="gene designation" value="YMC1"/>
</dbReference>
<dbReference type="VEuPathDB" id="FungiDB:YPR058W"/>
<dbReference type="eggNOG" id="KOG0758">
    <property type="taxonomic scope" value="Eukaryota"/>
</dbReference>
<dbReference type="GeneTree" id="ENSGT00940000176446"/>
<dbReference type="HOGENOM" id="CLU_015166_16_2_1"/>
<dbReference type="InParanoid" id="P32331"/>
<dbReference type="OMA" id="HCITETV"/>
<dbReference type="OrthoDB" id="409586at2759"/>
<dbReference type="BioCyc" id="YEAST:G3O-34210-MONOMER"/>
<dbReference type="Reactome" id="R-SCE-70635">
    <property type="pathway name" value="Urea cycle"/>
</dbReference>
<dbReference type="BioGRID-ORCS" id="856171">
    <property type="hits" value="0 hits in 10 CRISPR screens"/>
</dbReference>
<dbReference type="PRO" id="PR:P32331"/>
<dbReference type="Proteomes" id="UP000002311">
    <property type="component" value="Chromosome XVI"/>
</dbReference>
<dbReference type="RNAct" id="P32331">
    <property type="molecule type" value="protein"/>
</dbReference>
<dbReference type="GO" id="GO:0005743">
    <property type="term" value="C:mitochondrial inner membrane"/>
    <property type="evidence" value="ECO:0007669"/>
    <property type="project" value="UniProtKB-SubCell"/>
</dbReference>
<dbReference type="GO" id="GO:0005739">
    <property type="term" value="C:mitochondrion"/>
    <property type="evidence" value="ECO:0000314"/>
    <property type="project" value="SGD"/>
</dbReference>
<dbReference type="GO" id="GO:0015187">
    <property type="term" value="F:glycine transmembrane transporter activity"/>
    <property type="evidence" value="ECO:0000316"/>
    <property type="project" value="SGD"/>
</dbReference>
<dbReference type="GO" id="GO:0005342">
    <property type="term" value="F:organic acid transmembrane transporter activity"/>
    <property type="evidence" value="ECO:0000316"/>
    <property type="project" value="SGD"/>
</dbReference>
<dbReference type="GO" id="GO:1904983">
    <property type="term" value="P:glycine import into mitochondrion"/>
    <property type="evidence" value="ECO:0000316"/>
    <property type="project" value="SGD"/>
</dbReference>
<dbReference type="GO" id="GO:0006783">
    <property type="term" value="P:heme biosynthetic process"/>
    <property type="evidence" value="ECO:0000316"/>
    <property type="project" value="SGD"/>
</dbReference>
<dbReference type="GO" id="GO:1990575">
    <property type="term" value="P:mitochondrial L-ornithine transmembrane transport"/>
    <property type="evidence" value="ECO:0000318"/>
    <property type="project" value="GO_Central"/>
</dbReference>
<dbReference type="GO" id="GO:0006839">
    <property type="term" value="P:mitochondrial transport"/>
    <property type="evidence" value="ECO:0000316"/>
    <property type="project" value="SGD"/>
</dbReference>
<dbReference type="FunFam" id="1.50.40.10:FF:000163">
    <property type="entry name" value="Mitochondrial carrier protein"/>
    <property type="match status" value="1"/>
</dbReference>
<dbReference type="Gene3D" id="1.50.40.10">
    <property type="entry name" value="Mitochondrial carrier domain"/>
    <property type="match status" value="1"/>
</dbReference>
<dbReference type="InterPro" id="IPR050567">
    <property type="entry name" value="Mitochondrial_Carrier"/>
</dbReference>
<dbReference type="InterPro" id="IPR018108">
    <property type="entry name" value="Mitochondrial_sb/sol_carrier"/>
</dbReference>
<dbReference type="InterPro" id="IPR023395">
    <property type="entry name" value="Mt_carrier_dom_sf"/>
</dbReference>
<dbReference type="PANTHER" id="PTHR45624:SF51">
    <property type="entry name" value="CARRIER PROTEIN YMC2, MITOCHONDRIAL-RELATED"/>
    <property type="match status" value="1"/>
</dbReference>
<dbReference type="PANTHER" id="PTHR45624">
    <property type="entry name" value="MITOCHONDRIAL BASIC AMINO ACIDS TRANSPORTER-RELATED"/>
    <property type="match status" value="1"/>
</dbReference>
<dbReference type="Pfam" id="PF00153">
    <property type="entry name" value="Mito_carr"/>
    <property type="match status" value="3"/>
</dbReference>
<dbReference type="SUPFAM" id="SSF103506">
    <property type="entry name" value="Mitochondrial carrier"/>
    <property type="match status" value="1"/>
</dbReference>
<dbReference type="PROSITE" id="PS50920">
    <property type="entry name" value="SOLCAR"/>
    <property type="match status" value="3"/>
</dbReference>
<proteinExistence type="evidence at protein level"/>
<reference key="1">
    <citation type="journal article" date="1993" name="Yeast">
        <title>YMC1, a yeast gene encoding a new putative mitochondrial carrier protein.</title>
        <authorList>
            <person name="Graf R."/>
            <person name="Baum B."/>
            <person name="Braus G.H."/>
        </authorList>
    </citation>
    <scope>NUCLEOTIDE SEQUENCE [GENOMIC DNA]</scope>
</reference>
<reference key="2">
    <citation type="journal article" date="1997" name="Nature">
        <title>The nucleotide sequence of Saccharomyces cerevisiae chromosome XVI.</title>
        <authorList>
            <person name="Bussey H."/>
            <person name="Storms R.K."/>
            <person name="Ahmed A."/>
            <person name="Albermann K."/>
            <person name="Allen E."/>
            <person name="Ansorge W."/>
            <person name="Araujo R."/>
            <person name="Aparicio A."/>
            <person name="Barrell B.G."/>
            <person name="Badcock K."/>
            <person name="Benes V."/>
            <person name="Botstein D."/>
            <person name="Bowman S."/>
            <person name="Brueckner M."/>
            <person name="Carpenter J."/>
            <person name="Cherry J.M."/>
            <person name="Chung E."/>
            <person name="Churcher C.M."/>
            <person name="Coster F."/>
            <person name="Davis K."/>
            <person name="Davis R.W."/>
            <person name="Dietrich F.S."/>
            <person name="Delius H."/>
            <person name="DiPaolo T."/>
            <person name="Dubois E."/>
            <person name="Duesterhoeft A."/>
            <person name="Duncan M."/>
            <person name="Floeth M."/>
            <person name="Fortin N."/>
            <person name="Friesen J.D."/>
            <person name="Fritz C."/>
            <person name="Goffeau A."/>
            <person name="Hall J."/>
            <person name="Hebling U."/>
            <person name="Heumann K."/>
            <person name="Hilbert H."/>
            <person name="Hillier L.W."/>
            <person name="Hunicke-Smith S."/>
            <person name="Hyman R.W."/>
            <person name="Johnston M."/>
            <person name="Kalman S."/>
            <person name="Kleine K."/>
            <person name="Komp C."/>
            <person name="Kurdi O."/>
            <person name="Lashkari D."/>
            <person name="Lew H."/>
            <person name="Lin A."/>
            <person name="Lin D."/>
            <person name="Louis E.J."/>
            <person name="Marathe R."/>
            <person name="Messenguy F."/>
            <person name="Mewes H.-W."/>
            <person name="Mirtipati S."/>
            <person name="Moestl D."/>
            <person name="Mueller-Auer S."/>
            <person name="Namath A."/>
            <person name="Nentwich U."/>
            <person name="Oefner P."/>
            <person name="Pearson D."/>
            <person name="Petel F.X."/>
            <person name="Pohl T.M."/>
            <person name="Purnelle B."/>
            <person name="Rajandream M.A."/>
            <person name="Rechmann S."/>
            <person name="Rieger M."/>
            <person name="Riles L."/>
            <person name="Roberts D."/>
            <person name="Schaefer M."/>
            <person name="Scharfe M."/>
            <person name="Scherens B."/>
            <person name="Schramm S."/>
            <person name="Schroeder M."/>
            <person name="Sdicu A.-M."/>
            <person name="Tettelin H."/>
            <person name="Urrestarazu L.A."/>
            <person name="Ushinsky S."/>
            <person name="Vierendeels F."/>
            <person name="Vissers S."/>
            <person name="Voss H."/>
            <person name="Walsh S.V."/>
            <person name="Wambutt R."/>
            <person name="Wang Y."/>
            <person name="Wedler E."/>
            <person name="Wedler H."/>
            <person name="Winnett E."/>
            <person name="Zhong W.-W."/>
            <person name="Zollner A."/>
            <person name="Vo D.H."/>
            <person name="Hani J."/>
        </authorList>
    </citation>
    <scope>NUCLEOTIDE SEQUENCE [LARGE SCALE GENOMIC DNA]</scope>
    <source>
        <strain>ATCC 204508 / S288c</strain>
    </source>
</reference>
<reference key="3">
    <citation type="journal article" date="2014" name="G3 (Bethesda)">
        <title>The reference genome sequence of Saccharomyces cerevisiae: Then and now.</title>
        <authorList>
            <person name="Engel S.R."/>
            <person name="Dietrich F.S."/>
            <person name="Fisk D.G."/>
            <person name="Binkley G."/>
            <person name="Balakrishnan R."/>
            <person name="Costanzo M.C."/>
            <person name="Dwight S.S."/>
            <person name="Hitz B.C."/>
            <person name="Karra K."/>
            <person name="Nash R.S."/>
            <person name="Weng S."/>
            <person name="Wong E.D."/>
            <person name="Lloyd P."/>
            <person name="Skrzypek M.S."/>
            <person name="Miyasato S.R."/>
            <person name="Simison M."/>
            <person name="Cherry J.M."/>
        </authorList>
    </citation>
    <scope>GENOME REANNOTATION</scope>
    <source>
        <strain>ATCC 204508 / S288c</strain>
    </source>
</reference>
<reference key="4">
    <citation type="journal article" date="2000" name="Biochim. Biophys. Acta">
        <title>The yeast mitochondrial transport proteins: new sequences and consensus residues, lack of direct relation between consensus residues and transmembrane helices, expression patterns of the transport protein genes, and protein-protein interactions with other proteins.</title>
        <authorList>
            <person name="Belenkiy R."/>
            <person name="Haefele A."/>
            <person name="Eisen M.B."/>
            <person name="Wohlrab H."/>
        </authorList>
    </citation>
    <scope>SUBCELLULAR LOCATION</scope>
</reference>
<reference key="5">
    <citation type="journal article" date="2006" name="J. Proteome Res.">
        <title>Toward the complete yeast mitochondrial proteome: multidimensional separation techniques for mitochondrial proteomics.</title>
        <authorList>
            <person name="Reinders J."/>
            <person name="Zahedi R.P."/>
            <person name="Pfanner N."/>
            <person name="Meisinger C."/>
            <person name="Sickmann A."/>
        </authorList>
    </citation>
    <scope>SUBCELLULAR LOCATION [LARGE SCALE ANALYSIS]</scope>
    <scope>IDENTIFICATION BY MASS SPECTROMETRY</scope>
</reference>
<reference key="6">
    <citation type="journal article" date="2016" name="PLoS Genet.">
        <title>Glycine and folate ameliorate models of congenital sideroblastic anemia.</title>
        <authorList>
            <person name="Fernandez-Murray J.P."/>
            <person name="Prykhozhij S.V."/>
            <person name="Dufay J.N."/>
            <person name="Steele S.L."/>
            <person name="Gaston D."/>
            <person name="Nasrallah G.K."/>
            <person name="Coombs A.J."/>
            <person name="Liwski R.S."/>
            <person name="Fernandez C.V."/>
            <person name="Berman J.N."/>
            <person name="McMaster C.R."/>
        </authorList>
    </citation>
    <scope>FUNCTION</scope>
</reference>
<reference key="7">
    <citation type="journal article" date="2018" name="J. Proteome Res.">
        <title>Enrichment-based proteogenomics identifies microproteins, missing proteins, and novel smORFs in Saccharomyces cerevisiae.</title>
        <authorList>
            <person name="He C."/>
            <person name="Jia C."/>
            <person name="Zhang Y."/>
            <person name="Xu P."/>
        </authorList>
    </citation>
    <scope>IDENTIFICATION BY MASS SPECTROMETRY</scope>
</reference>